<dbReference type="EMBL" id="AB091672">
    <property type="protein sequence ID" value="BAC67163.1"/>
    <property type="molecule type" value="mRNA"/>
</dbReference>
<dbReference type="EMBL" id="DP000011">
    <property type="protein sequence ID" value="ABA99631.2"/>
    <property type="molecule type" value="Genomic_DNA"/>
</dbReference>
<dbReference type="EMBL" id="DP000011">
    <property type="protein sequence ID" value="ABA99632.2"/>
    <property type="status" value="ALT_SEQ"/>
    <property type="molecule type" value="Genomic_DNA"/>
</dbReference>
<dbReference type="EMBL" id="AP008218">
    <property type="protein sequence ID" value="BAF30422.1"/>
    <property type="status" value="ALT_SEQ"/>
    <property type="molecule type" value="Genomic_DNA"/>
</dbReference>
<dbReference type="EMBL" id="AP014968">
    <property type="status" value="NOT_ANNOTATED_CDS"/>
    <property type="molecule type" value="Genomic_DNA"/>
</dbReference>
<dbReference type="RefSeq" id="XP_015619709.1">
    <property type="nucleotide sequence ID" value="XM_015764223.1"/>
</dbReference>
<dbReference type="SMR" id="Q0ILJ3"/>
<dbReference type="FunCoup" id="Q0ILJ3">
    <property type="interactions" value="1376"/>
</dbReference>
<dbReference type="STRING" id="39947.Q0ILJ3"/>
<dbReference type="PaxDb" id="39947-Q0ILJ3"/>
<dbReference type="EnsemblPlants" id="Os12t0641400-02">
    <property type="protein sequence ID" value="Os12t0641400-02"/>
    <property type="gene ID" value="Os12g0641400"/>
</dbReference>
<dbReference type="Gramene" id="Os12t0641400-02">
    <property type="protein sequence ID" value="Os12t0641400-02"/>
    <property type="gene ID" value="Os12g0641400"/>
</dbReference>
<dbReference type="eggNOG" id="KOG0637">
    <property type="taxonomic scope" value="Eukaryota"/>
</dbReference>
<dbReference type="InParanoid" id="Q0ILJ3"/>
<dbReference type="OrthoDB" id="28755at2759"/>
<dbReference type="UniPathway" id="UPA00238"/>
<dbReference type="Proteomes" id="UP000000763">
    <property type="component" value="Chromosome 12"/>
</dbReference>
<dbReference type="Proteomes" id="UP000059680">
    <property type="component" value="Chromosome 12"/>
</dbReference>
<dbReference type="ExpressionAtlas" id="Q0ILJ3">
    <property type="expression patterns" value="baseline and differential"/>
</dbReference>
<dbReference type="GO" id="GO:0005801">
    <property type="term" value="C:cis-Golgi network"/>
    <property type="evidence" value="ECO:0007669"/>
    <property type="project" value="EnsemblPlants"/>
</dbReference>
<dbReference type="GO" id="GO:0009705">
    <property type="term" value="C:plant-type vacuole membrane"/>
    <property type="evidence" value="ECO:0000314"/>
    <property type="project" value="CACAO"/>
</dbReference>
<dbReference type="GO" id="GO:0005886">
    <property type="term" value="C:plasma membrane"/>
    <property type="evidence" value="ECO:0000318"/>
    <property type="project" value="GO_Central"/>
</dbReference>
<dbReference type="GO" id="GO:0005773">
    <property type="term" value="C:vacuole"/>
    <property type="evidence" value="ECO:0000318"/>
    <property type="project" value="GO_Central"/>
</dbReference>
<dbReference type="GO" id="GO:0008506">
    <property type="term" value="F:sucrose:proton symporter activity"/>
    <property type="evidence" value="ECO:0000318"/>
    <property type="project" value="GO_Central"/>
</dbReference>
<dbReference type="GO" id="GO:0005985">
    <property type="term" value="P:sucrose metabolic process"/>
    <property type="evidence" value="ECO:0007669"/>
    <property type="project" value="UniProtKB-UniPathway"/>
</dbReference>
<dbReference type="CDD" id="cd17313">
    <property type="entry name" value="MFS_SLC45_SUC"/>
    <property type="match status" value="1"/>
</dbReference>
<dbReference type="FunFam" id="1.20.1250.20:FF:000174">
    <property type="entry name" value="Sucrose transport protein"/>
    <property type="match status" value="1"/>
</dbReference>
<dbReference type="Gene3D" id="1.20.1250.20">
    <property type="entry name" value="MFS general substrate transporter like domains"/>
    <property type="match status" value="1"/>
</dbReference>
<dbReference type="InterPro" id="IPR011701">
    <property type="entry name" value="MFS"/>
</dbReference>
<dbReference type="InterPro" id="IPR036259">
    <property type="entry name" value="MFS_trans_sf"/>
</dbReference>
<dbReference type="InterPro" id="IPR005989">
    <property type="entry name" value="Suc_symporter_pln"/>
</dbReference>
<dbReference type="NCBIfam" id="TIGR01301">
    <property type="entry name" value="GPH_sucrose"/>
    <property type="match status" value="1"/>
</dbReference>
<dbReference type="PANTHER" id="PTHR19432:SF90">
    <property type="entry name" value="SUCROSE TRANSPORT PROTEIN SUC4"/>
    <property type="match status" value="1"/>
</dbReference>
<dbReference type="PANTHER" id="PTHR19432">
    <property type="entry name" value="SUGAR TRANSPORTER"/>
    <property type="match status" value="1"/>
</dbReference>
<dbReference type="Pfam" id="PF07690">
    <property type="entry name" value="MFS_1"/>
    <property type="match status" value="1"/>
</dbReference>
<dbReference type="SUPFAM" id="SSF103473">
    <property type="entry name" value="MFS general substrate transporter"/>
    <property type="match status" value="1"/>
</dbReference>
<protein>
    <recommendedName>
        <fullName>Sucrose transport protein SUT2</fullName>
    </recommendedName>
    <alternativeName>
        <fullName>SUC4-like protein</fullName>
    </alternativeName>
    <alternativeName>
        <fullName>Sucrose permease 2</fullName>
    </alternativeName>
    <alternativeName>
        <fullName>Sucrose transporter 2</fullName>
        <shortName>OsSUT2</shortName>
    </alternativeName>
    <alternativeName>
        <fullName>Sucrose-proton symporter 2</fullName>
    </alternativeName>
</protein>
<feature type="chain" id="PRO_0000247463" description="Sucrose transport protein SUT2">
    <location>
        <begin position="1"/>
        <end position="501"/>
    </location>
</feature>
<feature type="topological domain" description="Cytoplasmic" evidence="2">
    <location>
        <begin position="1"/>
        <end position="31"/>
    </location>
</feature>
<feature type="transmembrane region" description="Helical" evidence="2">
    <location>
        <begin position="32"/>
        <end position="52"/>
    </location>
</feature>
<feature type="topological domain" description="Extracellular" evidence="2">
    <location>
        <begin position="53"/>
        <end position="55"/>
    </location>
</feature>
<feature type="transmembrane region" description="Helical" evidence="2">
    <location>
        <begin position="56"/>
        <end position="76"/>
    </location>
</feature>
<feature type="topological domain" description="Cytoplasmic" evidence="2">
    <location>
        <begin position="77"/>
        <end position="98"/>
    </location>
</feature>
<feature type="transmembrane region" description="Helical" evidence="2">
    <location>
        <begin position="99"/>
        <end position="119"/>
    </location>
</feature>
<feature type="topological domain" description="Extracellular" evidence="2">
    <location>
        <begin position="120"/>
        <end position="135"/>
    </location>
</feature>
<feature type="transmembrane region" description="Helical" evidence="2">
    <location>
        <begin position="136"/>
        <end position="156"/>
    </location>
</feature>
<feature type="topological domain" description="Cytoplasmic" evidence="2">
    <location>
        <begin position="157"/>
        <end position="176"/>
    </location>
</feature>
<feature type="transmembrane region" description="Helical" evidence="2">
    <location>
        <begin position="177"/>
        <end position="197"/>
    </location>
</feature>
<feature type="topological domain" description="Extracellular" evidence="2">
    <location>
        <begin position="198"/>
        <end position="222"/>
    </location>
</feature>
<feature type="transmembrane region" description="Helical" evidence="2">
    <location>
        <begin position="223"/>
        <end position="243"/>
    </location>
</feature>
<feature type="topological domain" description="Cytoplasmic" evidence="2">
    <location>
        <begin position="244"/>
        <end position="278"/>
    </location>
</feature>
<feature type="transmembrane region" description="Helical" evidence="2">
    <location>
        <begin position="279"/>
        <end position="299"/>
    </location>
</feature>
<feature type="topological domain" description="Extracellular" evidence="2">
    <location>
        <begin position="300"/>
        <end position="327"/>
    </location>
</feature>
<feature type="transmembrane region" description="Helical" evidence="2">
    <location>
        <begin position="328"/>
        <end position="348"/>
    </location>
</feature>
<feature type="topological domain" description="Cytoplasmic" evidence="2">
    <location>
        <begin position="349"/>
        <end position="356"/>
    </location>
</feature>
<feature type="transmembrane region" description="Helical" evidence="2">
    <location>
        <begin position="357"/>
        <end position="377"/>
    </location>
</feature>
<feature type="topological domain" description="Extracellular" evidence="2">
    <location>
        <begin position="378"/>
        <end position="394"/>
    </location>
</feature>
<feature type="transmembrane region" description="Helical" evidence="2">
    <location>
        <begin position="395"/>
        <end position="415"/>
    </location>
</feature>
<feature type="topological domain" description="Cytoplasmic" evidence="2">
    <location>
        <begin position="416"/>
        <end position="433"/>
    </location>
</feature>
<feature type="transmembrane region" description="Helical" evidence="2">
    <location>
        <begin position="434"/>
        <end position="454"/>
    </location>
</feature>
<feature type="topological domain" description="Extracellular" evidence="2">
    <location>
        <begin position="455"/>
        <end position="467"/>
    </location>
</feature>
<feature type="transmembrane region" description="Helical" evidence="2">
    <location>
        <begin position="468"/>
        <end position="488"/>
    </location>
</feature>
<feature type="topological domain" description="Cytoplasmic" evidence="2">
    <location>
        <begin position="489"/>
        <end position="501"/>
    </location>
</feature>
<feature type="sequence conflict" description="In Ref. 1; BAC67163." evidence="4" ref="1">
    <original>L</original>
    <variation>P</variation>
    <location>
        <position position="43"/>
    </location>
</feature>
<feature type="sequence conflict" description="In Ref. 1; BAC67163." evidence="4" ref="1">
    <original>G</original>
    <variation>R</variation>
    <location>
        <position position="116"/>
    </location>
</feature>
<feature type="sequence conflict" description="In Ref. 1; BAC67163." evidence="4" ref="1">
    <original>IV</original>
    <variation>TA</variation>
    <location>
        <begin position="140"/>
        <end position="141"/>
    </location>
</feature>
<feature type="sequence conflict" description="In Ref. 1; BAC67163." evidence="4" ref="1">
    <original>L</original>
    <variation>P</variation>
    <location>
        <position position="164"/>
    </location>
</feature>
<feature type="sequence conflict" description="In Ref. 1; BAC67163." evidence="4" ref="1">
    <original>R</original>
    <variation>K</variation>
    <location>
        <position position="173"/>
    </location>
</feature>
<proteinExistence type="evidence at transcript level"/>
<evidence type="ECO:0000250" key="1"/>
<evidence type="ECO:0000255" key="2"/>
<evidence type="ECO:0000269" key="3">
    <source>
    </source>
</evidence>
<evidence type="ECO:0000305" key="4"/>
<name>SUT2_ORYSJ</name>
<keyword id="KW-1003">Cell membrane</keyword>
<keyword id="KW-0472">Membrane</keyword>
<keyword id="KW-1185">Reference proteome</keyword>
<keyword id="KW-0762">Sugar transport</keyword>
<keyword id="KW-0769">Symport</keyword>
<keyword id="KW-0812">Transmembrane</keyword>
<keyword id="KW-1133">Transmembrane helix</keyword>
<keyword id="KW-0813">Transport</keyword>
<reference key="1">
    <citation type="journal article" date="2003" name="Plant Cell Physiol.">
        <title>The sucrose transporter gene family in rice.</title>
        <authorList>
            <person name="Aoki N."/>
            <person name="Hirose T."/>
            <person name="Scofield G.N."/>
            <person name="Whitfeld P.R."/>
            <person name="Furbank R.T."/>
        </authorList>
    </citation>
    <scope>NUCLEOTIDE SEQUENCE [MRNA]</scope>
    <scope>TISSUE SPECIFICITY</scope>
    <scope>DEVELOPMENTAL STAGE</scope>
    <source>
        <strain>cv. Nipponbare</strain>
        <tissue>Panicle</tissue>
    </source>
</reference>
<reference key="2">
    <citation type="journal article" date="2005" name="BMC Biol.">
        <title>The sequence of rice chromosomes 11 and 12, rich in disease resistance genes and recent gene duplications.</title>
        <authorList>
            <consortium name="The rice chromosomes 11 and 12 sequencing consortia"/>
        </authorList>
    </citation>
    <scope>NUCLEOTIDE SEQUENCE [LARGE SCALE GENOMIC DNA]</scope>
    <source>
        <strain>cv. Nipponbare</strain>
    </source>
</reference>
<reference key="3">
    <citation type="journal article" date="2005" name="Nature">
        <title>The map-based sequence of the rice genome.</title>
        <authorList>
            <consortium name="International rice genome sequencing project (IRGSP)"/>
        </authorList>
    </citation>
    <scope>NUCLEOTIDE SEQUENCE [LARGE SCALE GENOMIC DNA]</scope>
    <source>
        <strain>cv. Nipponbare</strain>
    </source>
</reference>
<reference key="4">
    <citation type="journal article" date="2008" name="Nucleic Acids Res.">
        <title>The rice annotation project database (RAP-DB): 2008 update.</title>
        <authorList>
            <consortium name="The rice annotation project (RAP)"/>
        </authorList>
    </citation>
    <scope>GENOME REANNOTATION</scope>
    <source>
        <strain>cv. Nipponbare</strain>
    </source>
</reference>
<reference key="5">
    <citation type="journal article" date="2013" name="Rice">
        <title>Improvement of the Oryza sativa Nipponbare reference genome using next generation sequence and optical map data.</title>
        <authorList>
            <person name="Kawahara Y."/>
            <person name="de la Bastide M."/>
            <person name="Hamilton J.P."/>
            <person name="Kanamori H."/>
            <person name="McCombie W.R."/>
            <person name="Ouyang S."/>
            <person name="Schwartz D.C."/>
            <person name="Tanaka T."/>
            <person name="Wu J."/>
            <person name="Zhou S."/>
            <person name="Childs K.L."/>
            <person name="Davidson R.M."/>
            <person name="Lin H."/>
            <person name="Quesada-Ocampo L."/>
            <person name="Vaillancourt B."/>
            <person name="Sakai H."/>
            <person name="Lee S.S."/>
            <person name="Kim J."/>
            <person name="Numa H."/>
            <person name="Itoh T."/>
            <person name="Buell C.R."/>
            <person name="Matsumoto T."/>
        </authorList>
    </citation>
    <scope>GENOME REANNOTATION</scope>
    <source>
        <strain>cv. Nipponbare</strain>
    </source>
</reference>
<sequence length="501" mass="53215">MPRRPSGGGGGAGPAAAAVRKVPLRKLLRAASVACGVQFGWALQLSLLTPYVQELGIPHAFASLVWLCGPLSGLLVQPLVGHLSDRIAPAASPLGRRRPFIAAGAASIAAAVLTVGFSADLGRIFGDSITPGSTRLGAIIVYLVGFWLLDVGNNATQGPCRAFLADLTENDPRRTRIANAYFSLFMALGNILGYATGAYSGWYKIFPFTVTPSCSISCANLKSAFLLDIIILVVTTCITVASVQEPQSFGSDEADHPSTEQEAFLWELFGSFRYFTLPVWMVLIVTALTWIGWFPFILFDTDWMGREIYRGSPDDPSITQSYHDGVRMGSFGLMLNSVLLGFTSIVLEKLCRKWGAGLVWGVSNILMALCFVAMLVITYVAKNMDYPPSGVPPTGIVIASLVVFTILGAPLAITYSIPYAMAASRVENLGLGQGLAMGILNLAIVIPQVIVSLGSGPWDQLFGGGNAPAFAVAAAASFIGGLVAILGLPRARIASRRRGHR</sequence>
<accession>Q0ILJ3</accession>
<accession>Q2QLI1</accession>
<accession>Q2QLI2</accession>
<accession>Q4PKJ3</accession>
<accession>Q84KR5</accession>
<comment type="function">
    <text evidence="1">Responsible for the transport of sucrose into the cell, with the concomitant uptake of protons (symport system). May also transport other glucosides (By similarity).</text>
</comment>
<comment type="pathway">
    <text>Glycan biosynthesis; sucrose metabolism.</text>
</comment>
<comment type="subunit">
    <text evidence="1">Homodimer.</text>
</comment>
<comment type="subcellular location">
    <subcellularLocation>
        <location evidence="1">Cell membrane</location>
        <topology evidence="1">Multi-pass membrane protein</topology>
    </subcellularLocation>
</comment>
<comment type="tissue specificity">
    <text evidence="3">Widely expressed.</text>
</comment>
<comment type="developmental stage">
    <text evidence="3">Expressed in developing caryopses from 1 to 5 days after flowering (DAF) and then declines to nearly undetectable levels by 10 DAF.</text>
</comment>
<comment type="similarity">
    <text evidence="4">Belongs to the glycoside-pentoside-hexuronide (GPH) cation symporter transporter (TC 2.A.2.4) family.</text>
</comment>
<comment type="sequence caution" evidence="4">
    <conflict type="erroneous gene model prediction">
        <sequence resource="EMBL-CDS" id="ABA99632"/>
    </conflict>
</comment>
<comment type="sequence caution" evidence="4">
    <conflict type="erroneous gene model prediction">
        <sequence resource="EMBL-CDS" id="BAF30422"/>
    </conflict>
</comment>
<gene>
    <name type="primary">SUT2</name>
    <name type="synonym">SUT2M</name>
    <name type="ordered locus">Os12g0641400</name>
    <name type="ordered locus">LOC_Os12g44380</name>
</gene>
<organism>
    <name type="scientific">Oryza sativa subsp. japonica</name>
    <name type="common">Rice</name>
    <dbReference type="NCBI Taxonomy" id="39947"/>
    <lineage>
        <taxon>Eukaryota</taxon>
        <taxon>Viridiplantae</taxon>
        <taxon>Streptophyta</taxon>
        <taxon>Embryophyta</taxon>
        <taxon>Tracheophyta</taxon>
        <taxon>Spermatophyta</taxon>
        <taxon>Magnoliopsida</taxon>
        <taxon>Liliopsida</taxon>
        <taxon>Poales</taxon>
        <taxon>Poaceae</taxon>
        <taxon>BOP clade</taxon>
        <taxon>Oryzoideae</taxon>
        <taxon>Oryzeae</taxon>
        <taxon>Oryzinae</taxon>
        <taxon>Oryza</taxon>
        <taxon>Oryza sativa</taxon>
    </lineage>
</organism>